<keyword id="KW-1185">Reference proteome</keyword>
<keyword id="KW-0687">Ribonucleoprotein</keyword>
<keyword id="KW-0689">Ribosomal protein</keyword>
<dbReference type="EMBL" id="AM167904">
    <property type="protein sequence ID" value="CAJ50096.1"/>
    <property type="molecule type" value="Genomic_DNA"/>
</dbReference>
<dbReference type="RefSeq" id="WP_003810296.1">
    <property type="nucleotide sequence ID" value="NC_010645.1"/>
</dbReference>
<dbReference type="SMR" id="Q2KXH7"/>
<dbReference type="STRING" id="360910.BAV2486"/>
<dbReference type="GeneID" id="94353576"/>
<dbReference type="KEGG" id="bav:BAV2486"/>
<dbReference type="eggNOG" id="COG0267">
    <property type="taxonomic scope" value="Bacteria"/>
</dbReference>
<dbReference type="HOGENOM" id="CLU_190949_1_1_4"/>
<dbReference type="OrthoDB" id="21586at2"/>
<dbReference type="Proteomes" id="UP000001977">
    <property type="component" value="Chromosome"/>
</dbReference>
<dbReference type="GO" id="GO:0022625">
    <property type="term" value="C:cytosolic large ribosomal subunit"/>
    <property type="evidence" value="ECO:0007669"/>
    <property type="project" value="TreeGrafter"/>
</dbReference>
<dbReference type="GO" id="GO:0003735">
    <property type="term" value="F:structural constituent of ribosome"/>
    <property type="evidence" value="ECO:0007669"/>
    <property type="project" value="InterPro"/>
</dbReference>
<dbReference type="GO" id="GO:0006412">
    <property type="term" value="P:translation"/>
    <property type="evidence" value="ECO:0007669"/>
    <property type="project" value="UniProtKB-UniRule"/>
</dbReference>
<dbReference type="FunFam" id="2.20.28.120:FF:000001">
    <property type="entry name" value="50S ribosomal protein L33"/>
    <property type="match status" value="1"/>
</dbReference>
<dbReference type="Gene3D" id="2.20.28.120">
    <property type="entry name" value="Ribosomal protein L33"/>
    <property type="match status" value="1"/>
</dbReference>
<dbReference type="HAMAP" id="MF_00294">
    <property type="entry name" value="Ribosomal_bL33"/>
    <property type="match status" value="1"/>
</dbReference>
<dbReference type="InterPro" id="IPR001705">
    <property type="entry name" value="Ribosomal_bL33"/>
</dbReference>
<dbReference type="InterPro" id="IPR038584">
    <property type="entry name" value="Ribosomal_bL33_sf"/>
</dbReference>
<dbReference type="InterPro" id="IPR011332">
    <property type="entry name" value="Ribosomal_zn-bd"/>
</dbReference>
<dbReference type="NCBIfam" id="NF001860">
    <property type="entry name" value="PRK00595.1"/>
    <property type="match status" value="1"/>
</dbReference>
<dbReference type="NCBIfam" id="TIGR01023">
    <property type="entry name" value="rpmG_bact"/>
    <property type="match status" value="1"/>
</dbReference>
<dbReference type="PANTHER" id="PTHR15238">
    <property type="entry name" value="54S RIBOSOMAL PROTEIN L39, MITOCHONDRIAL"/>
    <property type="match status" value="1"/>
</dbReference>
<dbReference type="PANTHER" id="PTHR15238:SF1">
    <property type="entry name" value="LARGE RIBOSOMAL SUBUNIT PROTEIN BL33M"/>
    <property type="match status" value="1"/>
</dbReference>
<dbReference type="Pfam" id="PF00471">
    <property type="entry name" value="Ribosomal_L33"/>
    <property type="match status" value="1"/>
</dbReference>
<dbReference type="SUPFAM" id="SSF57829">
    <property type="entry name" value="Zn-binding ribosomal proteins"/>
    <property type="match status" value="1"/>
</dbReference>
<evidence type="ECO:0000255" key="1">
    <source>
        <dbReference type="HAMAP-Rule" id="MF_00294"/>
    </source>
</evidence>
<evidence type="ECO:0000305" key="2"/>
<comment type="similarity">
    <text evidence="1">Belongs to the bacterial ribosomal protein bL33 family.</text>
</comment>
<organism>
    <name type="scientific">Bordetella avium (strain 197N)</name>
    <dbReference type="NCBI Taxonomy" id="360910"/>
    <lineage>
        <taxon>Bacteria</taxon>
        <taxon>Pseudomonadati</taxon>
        <taxon>Pseudomonadota</taxon>
        <taxon>Betaproteobacteria</taxon>
        <taxon>Burkholderiales</taxon>
        <taxon>Alcaligenaceae</taxon>
        <taxon>Bordetella</taxon>
    </lineage>
</organism>
<sequence>MAKGIREKIKLESTAGTGHFYTTTKNKRNMPEKMLIKKFDPVARKHVDYKETKLK</sequence>
<feature type="chain" id="PRO_1000115095" description="Large ribosomal subunit protein bL33">
    <location>
        <begin position="1"/>
        <end position="55"/>
    </location>
</feature>
<accession>Q2KXH7</accession>
<name>RL33_BORA1</name>
<proteinExistence type="inferred from homology"/>
<protein>
    <recommendedName>
        <fullName evidence="1">Large ribosomal subunit protein bL33</fullName>
    </recommendedName>
    <alternativeName>
        <fullName evidence="2">50S ribosomal protein L33</fullName>
    </alternativeName>
</protein>
<reference key="1">
    <citation type="journal article" date="2006" name="J. Bacteriol.">
        <title>Comparison of the genome sequence of the poultry pathogen Bordetella avium with those of B. bronchiseptica, B. pertussis, and B. parapertussis reveals extensive diversity in surface structures associated with host interaction.</title>
        <authorList>
            <person name="Sebaihia M."/>
            <person name="Preston A."/>
            <person name="Maskell D.J."/>
            <person name="Kuzmiak H."/>
            <person name="Connell T.D."/>
            <person name="King N.D."/>
            <person name="Orndorff P.E."/>
            <person name="Miyamoto D.M."/>
            <person name="Thomson N.R."/>
            <person name="Harris D."/>
            <person name="Goble A."/>
            <person name="Lord A."/>
            <person name="Murphy L."/>
            <person name="Quail M.A."/>
            <person name="Rutter S."/>
            <person name="Squares R."/>
            <person name="Squares S."/>
            <person name="Woodward J."/>
            <person name="Parkhill J."/>
            <person name="Temple L.M."/>
        </authorList>
    </citation>
    <scope>NUCLEOTIDE SEQUENCE [LARGE SCALE GENOMIC DNA]</scope>
    <source>
        <strain>197N</strain>
    </source>
</reference>
<gene>
    <name evidence="1" type="primary">rpmG</name>
    <name type="ordered locus">BAV2486</name>
</gene>